<accession>Q6GZU7</accession>
<organism>
    <name type="scientific">Frog virus 3 (isolate Goorha)</name>
    <name type="common">FV-3</name>
    <dbReference type="NCBI Taxonomy" id="654924"/>
    <lineage>
        <taxon>Viruses</taxon>
        <taxon>Varidnaviria</taxon>
        <taxon>Bamfordvirae</taxon>
        <taxon>Nucleocytoviricota</taxon>
        <taxon>Megaviricetes</taxon>
        <taxon>Pimascovirales</taxon>
        <taxon>Iridoviridae</taxon>
        <taxon>Alphairidovirinae</taxon>
        <taxon>Ranavirus</taxon>
        <taxon>Frog virus 3</taxon>
    </lineage>
</organism>
<gene>
    <name type="ORF">FV3-029L</name>
</gene>
<keyword id="KW-1185">Reference proteome</keyword>
<protein>
    <recommendedName>
        <fullName>Uncharacterized protein 029L</fullName>
    </recommendedName>
</protein>
<sequence length="98" mass="11347">MRRMRSGFKHCAIPIDICRWEYILSPLILQDLQGPQQGGSVAVDVTVRCSVRFVHLPHYGGFNHGTVQRRVDPDDCRILRQLHIVLSLRLCLIDRDRL</sequence>
<dbReference type="EMBL" id="AY548484">
    <property type="protein sequence ID" value="AAT09688.1"/>
    <property type="molecule type" value="Genomic_DNA"/>
</dbReference>
<dbReference type="RefSeq" id="YP_031607.1">
    <property type="nucleotide sequence ID" value="NC_005946.1"/>
</dbReference>
<dbReference type="KEGG" id="vg:2947749"/>
<dbReference type="Proteomes" id="UP000008770">
    <property type="component" value="Segment"/>
</dbReference>
<proteinExistence type="predicted"/>
<name>029L_FRG3G</name>
<organismHost>
    <name type="scientific">Dryophytes versicolor</name>
    <name type="common">chameleon treefrog</name>
    <dbReference type="NCBI Taxonomy" id="30343"/>
</organismHost>
<organismHost>
    <name type="scientific">Lithobates pipiens</name>
    <name type="common">Northern leopard frog</name>
    <name type="synonym">Rana pipiens</name>
    <dbReference type="NCBI Taxonomy" id="8404"/>
</organismHost>
<organismHost>
    <name type="scientific">Lithobates sylvaticus</name>
    <name type="common">Wood frog</name>
    <name type="synonym">Rana sylvatica</name>
    <dbReference type="NCBI Taxonomy" id="45438"/>
</organismHost>
<organismHost>
    <name type="scientific">Notophthalmus viridescens</name>
    <name type="common">Eastern newt</name>
    <name type="synonym">Triturus viridescens</name>
    <dbReference type="NCBI Taxonomy" id="8316"/>
</organismHost>
<reference key="1">
    <citation type="journal article" date="2004" name="Virology">
        <title>Comparative genomic analyses of frog virus 3, type species of the genus Ranavirus (family Iridoviridae).</title>
        <authorList>
            <person name="Tan W.G."/>
            <person name="Barkman T.J."/>
            <person name="Gregory Chinchar V."/>
            <person name="Essani K."/>
        </authorList>
    </citation>
    <scope>NUCLEOTIDE SEQUENCE [LARGE SCALE GENOMIC DNA]</scope>
</reference>
<feature type="chain" id="PRO_0000410570" description="Uncharacterized protein 029L">
    <location>
        <begin position="1"/>
        <end position="98"/>
    </location>
</feature>